<proteinExistence type="evidence at transcript level"/>
<comment type="function">
    <text evidence="2">Component of the NuA4 histone acetyltransferase complex which is involved in transcriptional activation of select genes principally by acetylation of nucleosomal histone H4 and H2A. This modification may both alter nucleosome - DNA interactions and promote interaction of the modified histones with other proteins which positively regulate transcription. Component of HBO1 complexes, which specifically mediate acetylation of histone H3 at 'Lys-14' (H3K14ac), and have reduced activity toward histone H4. Component of the MOZ/MORF complex which has a histone H3 acetyltransferase activity.</text>
</comment>
<comment type="subunit">
    <text evidence="2">Component of the NuA4 histone acetyltransferase complex which contains the catalytic subunit KAT5 and the subunits EP400, TRRAP, BRD8, EPC1, DMAP1, RUVBL1, RUVBL2, ING3, actin, ACTL6A, MORF4L1, MORF4L2, MRGBP, YEATS4, VPS72 and MEAF6. Component of the HBO1 complex composed of KAT7/HBO1, MEAF6, ING4 or ING5, and one scaffold subunit: complexes containing BRPF scaffold (BRPF1, BRD1/BRPF2 or BRPF3) direct KAT7/HBO1 specificity towards H3K14ac, while complexes containing JADE scaffold (JADE1, JADE2 and JADE3) mediate acetylation of histone H4. Component of the MOZ/MORF complex composed at least of ING5, KAT6A, KAT6B, MEAF6 and one of BRPF1, BRD1/BRPF2 and BRPF3.</text>
</comment>
<comment type="subcellular location">
    <subcellularLocation>
        <location evidence="2">Nucleus</location>
        <location evidence="2">Nucleolus</location>
    </subcellularLocation>
    <subcellularLocation>
        <location evidence="2">Chromosome</location>
        <location evidence="2">Centromere</location>
        <location evidence="2">Kinetochore</location>
    </subcellularLocation>
</comment>
<comment type="alternative products">
    <event type="alternative splicing"/>
    <isoform>
        <id>Q58CU0-1</id>
        <name>1</name>
        <sequence type="displayed"/>
    </isoform>
    <isoform>
        <id>Q58CU0-2</id>
        <name>2</name>
        <sequence type="described" ref="VSP_022449 VSP_022448"/>
    </isoform>
</comment>
<comment type="similarity">
    <text evidence="6">Belongs to the EAF6 family.</text>
</comment>
<evidence type="ECO:0000250" key="1">
    <source>
        <dbReference type="UniProtKB" id="Q2VPQ9"/>
    </source>
</evidence>
<evidence type="ECO:0000250" key="2">
    <source>
        <dbReference type="UniProtKB" id="Q9HAF1"/>
    </source>
</evidence>
<evidence type="ECO:0000255" key="3"/>
<evidence type="ECO:0000256" key="4">
    <source>
        <dbReference type="SAM" id="MobiDB-lite"/>
    </source>
</evidence>
<evidence type="ECO:0000303" key="5">
    <source>
    </source>
</evidence>
<evidence type="ECO:0000305" key="6"/>
<name>EAF6_BOVIN</name>
<keyword id="KW-0007">Acetylation</keyword>
<keyword id="KW-0010">Activator</keyword>
<keyword id="KW-0025">Alternative splicing</keyword>
<keyword id="KW-0137">Centromere</keyword>
<keyword id="KW-0156">Chromatin regulator</keyword>
<keyword id="KW-0158">Chromosome</keyword>
<keyword id="KW-0175">Coiled coil</keyword>
<keyword id="KW-1017">Isopeptide bond</keyword>
<keyword id="KW-0995">Kinetochore</keyword>
<keyword id="KW-0539">Nucleus</keyword>
<keyword id="KW-0597">Phosphoprotein</keyword>
<keyword id="KW-1185">Reference proteome</keyword>
<keyword id="KW-0804">Transcription</keyword>
<keyword id="KW-0805">Transcription regulation</keyword>
<keyword id="KW-0832">Ubl conjugation</keyword>
<feature type="initiator methionine" description="Removed" evidence="1">
    <location>
        <position position="1"/>
    </location>
</feature>
<feature type="chain" id="PRO_0000272608" description="Chromatin modification-related protein MEAF6">
    <location>
        <begin position="2"/>
        <end position="191"/>
    </location>
</feature>
<feature type="region of interest" description="Disordered" evidence="4">
    <location>
        <begin position="104"/>
        <end position="191"/>
    </location>
</feature>
<feature type="coiled-coil region" evidence="3">
    <location>
        <begin position="11"/>
        <end position="47"/>
    </location>
</feature>
<feature type="compositionally biased region" description="Polar residues" evidence="4">
    <location>
        <begin position="119"/>
        <end position="128"/>
    </location>
</feature>
<feature type="compositionally biased region" description="Acidic residues" evidence="4">
    <location>
        <begin position="135"/>
        <end position="144"/>
    </location>
</feature>
<feature type="compositionally biased region" description="Low complexity" evidence="4">
    <location>
        <begin position="154"/>
        <end position="164"/>
    </location>
</feature>
<feature type="compositionally biased region" description="Basic residues" evidence="4">
    <location>
        <begin position="165"/>
        <end position="177"/>
    </location>
</feature>
<feature type="compositionally biased region" description="Basic and acidic residues" evidence="4">
    <location>
        <begin position="178"/>
        <end position="191"/>
    </location>
</feature>
<feature type="modified residue" description="N-acetylalanine" evidence="1">
    <location>
        <position position="2"/>
    </location>
</feature>
<feature type="modified residue" description="N6-acetyllysine" evidence="1">
    <location>
        <position position="6"/>
    </location>
</feature>
<feature type="modified residue" description="N6-acetyllysine; alternate" evidence="2">
    <location>
        <position position="69"/>
    </location>
</feature>
<feature type="modified residue" description="N6-acetyllysine" evidence="2">
    <location>
        <position position="74"/>
    </location>
</feature>
<feature type="modified residue" description="Phosphoserine" evidence="2">
    <location>
        <position position="118"/>
    </location>
</feature>
<feature type="modified residue" description="Phosphothreonine" evidence="2">
    <location>
        <position position="120"/>
    </location>
</feature>
<feature type="cross-link" description="Glycyl lysine isopeptide (Lys-Gly) (interchain with G-Cter in SUMO2); alternate" evidence="2">
    <location>
        <position position="69"/>
    </location>
</feature>
<feature type="cross-link" description="Glycyl lysine isopeptide (Lys-Gly) (interchain with G-Cter in SUMO1); alternate" evidence="2">
    <location>
        <position position="113"/>
    </location>
</feature>
<feature type="cross-link" description="Glycyl lysine isopeptide (Lys-Gly) (interchain with G-Cter in SUMO2); alternate" evidence="2">
    <location>
        <position position="113"/>
    </location>
</feature>
<feature type="splice variant" id="VSP_022449" description="In isoform 2." evidence="5">
    <location>
        <begin position="1"/>
        <end position="52"/>
    </location>
</feature>
<feature type="splice variant" id="VSP_022448" description="In isoform 2." evidence="5">
    <original>R</original>
    <variation>SPSGMFDYDFE</variation>
    <location>
        <position position="178"/>
    </location>
</feature>
<reference key="1">
    <citation type="journal article" date="2005" name="BMC Genomics">
        <title>Characterization of 954 bovine full-CDS cDNA sequences.</title>
        <authorList>
            <person name="Harhay G.P."/>
            <person name="Sonstegard T.S."/>
            <person name="Keele J.W."/>
            <person name="Heaton M.P."/>
            <person name="Clawson M.L."/>
            <person name="Snelling W.M."/>
            <person name="Wiedmann R.T."/>
            <person name="Van Tassell C.P."/>
            <person name="Smith T.P.L."/>
        </authorList>
    </citation>
    <scope>NUCLEOTIDE SEQUENCE [LARGE SCALE MRNA] (ISOFORM 2)</scope>
</reference>
<reference key="2">
    <citation type="submission" date="2006-03" db="EMBL/GenBank/DDBJ databases">
        <authorList>
            <consortium name="NIH - Mammalian Gene Collection (MGC) project"/>
        </authorList>
    </citation>
    <scope>NUCLEOTIDE SEQUENCE [LARGE SCALE MRNA] (ISOFORM 1)</scope>
    <source>
        <strain>Hereford</strain>
        <tissue>Fetal liver</tissue>
    </source>
</reference>
<sequence>MAMHNKAAPPQIPDTRRELAELVKRKQELAETLANLERQIYAFEGSYLEDTQMYGNIIRGWDRYLTNQKNSNSKNDRRNRKFKEAERLFSKSSVTSAAAVSALAGVQDQLIEKREPGSGTESDTSPDFHNQENEPNQEDPEDLDGSVQGVKPQKAASSTSTGSHHSSHKKRKNKNRHRIDLKLNKKPRADY</sequence>
<accession>Q58CU0</accession>
<organism>
    <name type="scientific">Bos taurus</name>
    <name type="common">Bovine</name>
    <dbReference type="NCBI Taxonomy" id="9913"/>
    <lineage>
        <taxon>Eukaryota</taxon>
        <taxon>Metazoa</taxon>
        <taxon>Chordata</taxon>
        <taxon>Craniata</taxon>
        <taxon>Vertebrata</taxon>
        <taxon>Euteleostomi</taxon>
        <taxon>Mammalia</taxon>
        <taxon>Eutheria</taxon>
        <taxon>Laurasiatheria</taxon>
        <taxon>Artiodactyla</taxon>
        <taxon>Ruminantia</taxon>
        <taxon>Pecora</taxon>
        <taxon>Bovidae</taxon>
        <taxon>Bovinae</taxon>
        <taxon>Bos</taxon>
    </lineage>
</organism>
<protein>
    <recommendedName>
        <fullName>Chromatin modification-related protein MEAF6</fullName>
        <shortName>MYST/Esa1-associated factor 6</shortName>
    </recommendedName>
    <alternativeName>
        <fullName>Esa1-associated factor 6 homolog</fullName>
        <shortName>Protein EAF6 homolog</shortName>
    </alternativeName>
</protein>
<gene>
    <name type="primary">MEAF6</name>
</gene>
<dbReference type="EMBL" id="BT021857">
    <property type="protein sequence ID" value="AAX46704.1"/>
    <property type="molecule type" value="mRNA"/>
</dbReference>
<dbReference type="EMBL" id="DV808321">
    <property type="status" value="NOT_ANNOTATED_CDS"/>
    <property type="molecule type" value="mRNA"/>
</dbReference>
<dbReference type="RefSeq" id="XP_005204893.1">
    <molecule id="Q58CU0-1"/>
    <property type="nucleotide sequence ID" value="XM_005204836.5"/>
</dbReference>
<dbReference type="RefSeq" id="XP_024845411.1">
    <molecule id="Q58CU0-2"/>
    <property type="nucleotide sequence ID" value="XM_024989643.2"/>
</dbReference>
<dbReference type="SMR" id="Q58CU0"/>
<dbReference type="FunCoup" id="Q58CU0">
    <property type="interactions" value="2817"/>
</dbReference>
<dbReference type="STRING" id="9913.ENSBTAP00000052635"/>
<dbReference type="GeneID" id="540599"/>
<dbReference type="CTD" id="64769"/>
<dbReference type="eggNOG" id="KOG3856">
    <property type="taxonomic scope" value="Eukaryota"/>
</dbReference>
<dbReference type="InParanoid" id="Q58CU0"/>
<dbReference type="OrthoDB" id="440324at2759"/>
<dbReference type="Proteomes" id="UP000009136">
    <property type="component" value="Unplaced"/>
</dbReference>
<dbReference type="GO" id="GO:0000776">
    <property type="term" value="C:kinetochore"/>
    <property type="evidence" value="ECO:0000250"/>
    <property type="project" value="UniProtKB"/>
</dbReference>
<dbReference type="GO" id="GO:0070776">
    <property type="term" value="C:MOZ/MORF histone acetyltransferase complex"/>
    <property type="evidence" value="ECO:0000250"/>
    <property type="project" value="UniProtKB"/>
</dbReference>
<dbReference type="GO" id="GO:0035267">
    <property type="term" value="C:NuA4 histone acetyltransferase complex"/>
    <property type="evidence" value="ECO:0000250"/>
    <property type="project" value="UniProtKB"/>
</dbReference>
<dbReference type="GO" id="GO:0005730">
    <property type="term" value="C:nucleolus"/>
    <property type="evidence" value="ECO:0000250"/>
    <property type="project" value="UniProtKB"/>
</dbReference>
<dbReference type="GO" id="GO:0006338">
    <property type="term" value="P:chromatin remodeling"/>
    <property type="evidence" value="ECO:0007669"/>
    <property type="project" value="GOC"/>
</dbReference>
<dbReference type="InterPro" id="IPR015418">
    <property type="entry name" value="Eaf6"/>
</dbReference>
<dbReference type="PANTHER" id="PTHR13476">
    <property type="entry name" value="CHROMATIN MODIFICATION-RELATED PROTEIN MEAF6"/>
    <property type="match status" value="1"/>
</dbReference>
<dbReference type="Pfam" id="PF09340">
    <property type="entry name" value="NuA4"/>
    <property type="match status" value="1"/>
</dbReference>